<sequence length="595" mass="65842">MEFCDESYDLVNIDEFDALWVASRHGVAFGVPPCLLISDDDAIARSSIELKSGPSSSNLSPSTLSTEKTSSDSSGVICDPQLHETWREGLGKFPAKEHARKVARELGADHGIIFLLGQDEKYYEDSDMGPTFRQRRYFYYITGADFPGCAVTYDILRDKLVLWIPRIEPRTVLWFGKVPTPEECKAASDVDSVYYIDFLHEKQCPVFKRGQTIHVLHPDQIPPELDHLGKFIRIDAVRLKPAMDAARVIKTDYEIALIRRANAVSSAAHKAVLRNIKRFTNEREIDALFRGYCIAHGAPIQSYPVIAASGINASTLHYDDNNQSLKNRQLLILDAGAEVHCYASDITRTIPLPGSFTPLAREIYRLVERMQDECIAQIKPGVRFSALHAHACAVAVTGLLKLGILRGEEEEILARGTVAAFFPHGLGHHVGLEVHDVSGTERLLLNGGPGSGPGSGGGYGCGASTWRGYRLRRRVMTKRESLTPWEVAALWEGAKPEKEKQQERWLLNNVPLDEVEAALTLASSSGARGQKLAPGMVVTVEPGIYFLPRVLEKYWNVGGVRIEDDILVTKKGYENLTTAPKGDEMMKCMGESGLL</sequence>
<dbReference type="EC" id="3.4.11.9"/>
<dbReference type="EMBL" id="CH408030">
    <property type="protein sequence ID" value="EAQ91007.1"/>
    <property type="molecule type" value="Genomic_DNA"/>
</dbReference>
<dbReference type="RefSeq" id="XP_001229458.1">
    <property type="nucleotide sequence ID" value="XM_001229457.1"/>
</dbReference>
<dbReference type="SMR" id="Q2HA12"/>
<dbReference type="STRING" id="306901.Q2HA12"/>
<dbReference type="GeneID" id="4389537"/>
<dbReference type="VEuPathDB" id="FungiDB:CHGG_02942"/>
<dbReference type="eggNOG" id="KOG2737">
    <property type="taxonomic scope" value="Eukaryota"/>
</dbReference>
<dbReference type="HOGENOM" id="CLU_017266_1_2_1"/>
<dbReference type="InParanoid" id="Q2HA12"/>
<dbReference type="OMA" id="YELRMIR"/>
<dbReference type="OrthoDB" id="10261878at2759"/>
<dbReference type="Proteomes" id="UP000001056">
    <property type="component" value="Unassembled WGS sequence"/>
</dbReference>
<dbReference type="GO" id="GO:0030145">
    <property type="term" value="F:manganese ion binding"/>
    <property type="evidence" value="ECO:0007669"/>
    <property type="project" value="InterPro"/>
</dbReference>
<dbReference type="GO" id="GO:0070006">
    <property type="term" value="F:metalloaminopeptidase activity"/>
    <property type="evidence" value="ECO:0007669"/>
    <property type="project" value="InterPro"/>
</dbReference>
<dbReference type="GO" id="GO:0006508">
    <property type="term" value="P:proteolysis"/>
    <property type="evidence" value="ECO:0007669"/>
    <property type="project" value="UniProtKB-KW"/>
</dbReference>
<dbReference type="CDD" id="cd01087">
    <property type="entry name" value="Prolidase"/>
    <property type="match status" value="1"/>
</dbReference>
<dbReference type="Gene3D" id="3.90.230.10">
    <property type="entry name" value="Creatinase/methionine aminopeptidase superfamily"/>
    <property type="match status" value="1"/>
</dbReference>
<dbReference type="Gene3D" id="3.40.350.10">
    <property type="entry name" value="Creatinase/prolidase N-terminal domain"/>
    <property type="match status" value="1"/>
</dbReference>
<dbReference type="InterPro" id="IPR007865">
    <property type="entry name" value="Aminopep_P_N"/>
</dbReference>
<dbReference type="InterPro" id="IPR029149">
    <property type="entry name" value="Creatin/AminoP/Spt16_N"/>
</dbReference>
<dbReference type="InterPro" id="IPR036005">
    <property type="entry name" value="Creatinase/aminopeptidase-like"/>
</dbReference>
<dbReference type="InterPro" id="IPR000994">
    <property type="entry name" value="Pept_M24"/>
</dbReference>
<dbReference type="InterPro" id="IPR001131">
    <property type="entry name" value="Peptidase_M24B_aminopep-P_CS"/>
</dbReference>
<dbReference type="InterPro" id="IPR052433">
    <property type="entry name" value="X-Pro_dipept-like"/>
</dbReference>
<dbReference type="PANTHER" id="PTHR43226">
    <property type="entry name" value="XAA-PRO AMINOPEPTIDASE 3"/>
    <property type="match status" value="1"/>
</dbReference>
<dbReference type="PANTHER" id="PTHR43226:SF3">
    <property type="entry name" value="XAA-PRO AMINOPEPTIDASE AN0832-RELATED"/>
    <property type="match status" value="1"/>
</dbReference>
<dbReference type="Pfam" id="PF05195">
    <property type="entry name" value="AMP_N"/>
    <property type="match status" value="1"/>
</dbReference>
<dbReference type="Pfam" id="PF00557">
    <property type="entry name" value="Peptidase_M24"/>
    <property type="match status" value="2"/>
</dbReference>
<dbReference type="SMART" id="SM01011">
    <property type="entry name" value="AMP_N"/>
    <property type="match status" value="1"/>
</dbReference>
<dbReference type="SUPFAM" id="SSF55920">
    <property type="entry name" value="Creatinase/aminopeptidase"/>
    <property type="match status" value="2"/>
</dbReference>
<dbReference type="SUPFAM" id="SSF53092">
    <property type="entry name" value="Creatinase/prolidase N-terminal domain"/>
    <property type="match status" value="1"/>
</dbReference>
<dbReference type="PROSITE" id="PS00491">
    <property type="entry name" value="PROLINE_PEPTIDASE"/>
    <property type="match status" value="1"/>
</dbReference>
<accession>Q2HA12</accession>
<reference key="1">
    <citation type="journal article" date="2015" name="Genome Announc.">
        <title>Draft genome sequence of the cellulolytic fungus Chaetomium globosum.</title>
        <authorList>
            <person name="Cuomo C.A."/>
            <person name="Untereiner W.A."/>
            <person name="Ma L.-J."/>
            <person name="Grabherr M."/>
            <person name="Birren B.W."/>
        </authorList>
    </citation>
    <scope>NUCLEOTIDE SEQUENCE [LARGE SCALE GENOMIC DNA]</scope>
    <source>
        <strain>ATCC 6205 / CBS 148.51 / DSM 1962 / NBRC 6347 / NRRL 1970</strain>
    </source>
</reference>
<proteinExistence type="inferred from homology"/>
<keyword id="KW-0031">Aminopeptidase</keyword>
<keyword id="KW-0378">Hydrolase</keyword>
<keyword id="KW-0464">Manganese</keyword>
<keyword id="KW-0479">Metal-binding</keyword>
<keyword id="KW-0482">Metalloprotease</keyword>
<keyword id="KW-0645">Protease</keyword>
<keyword id="KW-1185">Reference proteome</keyword>
<evidence type="ECO:0000250" key="1"/>
<evidence type="ECO:0000256" key="2">
    <source>
        <dbReference type="SAM" id="MobiDB-lite"/>
    </source>
</evidence>
<evidence type="ECO:0000305" key="3"/>
<comment type="function">
    <text evidence="1">Catalyzes the removal of a penultimate prolyl residue from the N-termini of peptides.</text>
</comment>
<comment type="catalytic activity">
    <reaction>
        <text>Release of any N-terminal amino acid, including proline, that is linked to proline, even from a dipeptide or tripeptide.</text>
        <dbReference type="EC" id="3.4.11.9"/>
    </reaction>
</comment>
<comment type="cofactor">
    <cofactor evidence="1">
        <name>Mn(2+)</name>
        <dbReference type="ChEBI" id="CHEBI:29035"/>
    </cofactor>
    <text evidence="1">Binds 2 manganese ions per subunit.</text>
</comment>
<comment type="similarity">
    <text evidence="3">Belongs to the peptidase M24B family.</text>
</comment>
<feature type="chain" id="PRO_0000411831" description="Probable Xaa-Pro aminopeptidase CHGG_02942">
    <location>
        <begin position="1"/>
        <end position="595"/>
    </location>
</feature>
<feature type="region of interest" description="Disordered" evidence="2">
    <location>
        <begin position="51"/>
        <end position="76"/>
    </location>
</feature>
<feature type="compositionally biased region" description="Low complexity" evidence="2">
    <location>
        <begin position="52"/>
        <end position="66"/>
    </location>
</feature>
<feature type="binding site" evidence="1">
    <location>
        <position position="334"/>
    </location>
    <ligand>
        <name>Mn(2+)</name>
        <dbReference type="ChEBI" id="CHEBI:29035"/>
        <label>2</label>
    </ligand>
</feature>
<feature type="binding site" evidence="1">
    <location>
        <position position="345"/>
    </location>
    <ligand>
        <name>Mn(2+)</name>
        <dbReference type="ChEBI" id="CHEBI:29035"/>
        <label>1</label>
    </ligand>
</feature>
<feature type="binding site" evidence="1">
    <location>
        <position position="345"/>
    </location>
    <ligand>
        <name>Mn(2+)</name>
        <dbReference type="ChEBI" id="CHEBI:29035"/>
        <label>2</label>
    </ligand>
</feature>
<feature type="binding site" evidence="1">
    <location>
        <position position="541"/>
    </location>
    <ligand>
        <name>Mn(2+)</name>
        <dbReference type="ChEBI" id="CHEBI:29035"/>
        <label>1</label>
    </ligand>
</feature>
<feature type="binding site" evidence="1">
    <location>
        <position position="563"/>
    </location>
    <ligand>
        <name>Mn(2+)</name>
        <dbReference type="ChEBI" id="CHEBI:29035"/>
        <label>1</label>
    </ligand>
</feature>
<feature type="binding site" evidence="1">
    <location>
        <position position="563"/>
    </location>
    <ligand>
        <name>Mn(2+)</name>
        <dbReference type="ChEBI" id="CHEBI:29035"/>
        <label>2</label>
    </ligand>
</feature>
<gene>
    <name type="ORF">CHGG_02942</name>
</gene>
<protein>
    <recommendedName>
        <fullName>Probable Xaa-Pro aminopeptidase CHGG_02942</fullName>
        <ecNumber>3.4.11.9</ecNumber>
    </recommendedName>
    <alternativeName>
        <fullName>Aminoacylproline aminopeptidase</fullName>
    </alternativeName>
    <alternativeName>
        <fullName>Prolidase</fullName>
    </alternativeName>
</protein>
<organism>
    <name type="scientific">Chaetomium globosum (strain ATCC 6205 / CBS 148.51 / DSM 1962 / NBRC 6347 / NRRL 1970)</name>
    <name type="common">Soil fungus</name>
    <dbReference type="NCBI Taxonomy" id="306901"/>
    <lineage>
        <taxon>Eukaryota</taxon>
        <taxon>Fungi</taxon>
        <taxon>Dikarya</taxon>
        <taxon>Ascomycota</taxon>
        <taxon>Pezizomycotina</taxon>
        <taxon>Sordariomycetes</taxon>
        <taxon>Sordariomycetidae</taxon>
        <taxon>Sordariales</taxon>
        <taxon>Chaetomiaceae</taxon>
        <taxon>Chaetomium</taxon>
    </lineage>
</organism>
<name>AMPP2_CHAGB</name>